<name>MAPK3_HUMAN</name>
<organism>
    <name type="scientific">Homo sapiens</name>
    <name type="common">Human</name>
    <dbReference type="NCBI Taxonomy" id="9606"/>
    <lineage>
        <taxon>Eukaryota</taxon>
        <taxon>Metazoa</taxon>
        <taxon>Chordata</taxon>
        <taxon>Craniata</taxon>
        <taxon>Vertebrata</taxon>
        <taxon>Euteleostomi</taxon>
        <taxon>Mammalia</taxon>
        <taxon>Eutheria</taxon>
        <taxon>Euarchontoglires</taxon>
        <taxon>Primates</taxon>
        <taxon>Haplorrhini</taxon>
        <taxon>Catarrhini</taxon>
        <taxon>Hominidae</taxon>
        <taxon>Homo</taxon>
    </lineage>
</organism>
<dbReference type="EC" id="2.7.11.1"/>
<dbReference type="EMBL" id="U43784">
    <property type="protein sequence ID" value="AAC50428.1"/>
    <property type="molecule type" value="mRNA"/>
</dbReference>
<dbReference type="EMBL" id="U09578">
    <property type="protein sequence ID" value="AAD09136.1"/>
    <property type="molecule type" value="mRNA"/>
</dbReference>
<dbReference type="EMBL" id="AB451303">
    <property type="protein sequence ID" value="BAG70117.1"/>
    <property type="molecule type" value="mRNA"/>
</dbReference>
<dbReference type="EMBL" id="CH471055">
    <property type="protein sequence ID" value="EAW65131.1"/>
    <property type="molecule type" value="Genomic_DNA"/>
</dbReference>
<dbReference type="EMBL" id="BC001662">
    <property type="protein sequence ID" value="AAH01662.1"/>
    <property type="molecule type" value="mRNA"/>
</dbReference>
<dbReference type="EMBL" id="BC007591">
    <property type="protein sequence ID" value="AAH07591.1"/>
    <property type="molecule type" value="mRNA"/>
</dbReference>
<dbReference type="EMBL" id="BC010407">
    <property type="protein sequence ID" value="AAH10407.1"/>
    <property type="molecule type" value="mRNA"/>
</dbReference>
<dbReference type="CCDS" id="CCDS2832.1"/>
<dbReference type="PIR" id="JC6094">
    <property type="entry name" value="JC6094"/>
</dbReference>
<dbReference type="RefSeq" id="NP_001230854.1">
    <property type="nucleotide sequence ID" value="NM_001243925.2"/>
</dbReference>
<dbReference type="RefSeq" id="NP_001230855.1">
    <property type="nucleotide sequence ID" value="NM_001243926.2"/>
</dbReference>
<dbReference type="RefSeq" id="NP_004626.1">
    <property type="nucleotide sequence ID" value="NM_004635.5"/>
</dbReference>
<dbReference type="RefSeq" id="XP_047304839.1">
    <property type="nucleotide sequence ID" value="XM_047448883.1"/>
</dbReference>
<dbReference type="RefSeq" id="XP_047304840.1">
    <property type="nucleotide sequence ID" value="XM_047448884.1"/>
</dbReference>
<dbReference type="RefSeq" id="XP_047304841.1">
    <property type="nucleotide sequence ID" value="XM_047448885.1"/>
</dbReference>
<dbReference type="RefSeq" id="XP_047304842.1">
    <property type="nucleotide sequence ID" value="XM_047448886.1"/>
</dbReference>
<dbReference type="RefSeq" id="XP_047304843.1">
    <property type="nucleotide sequence ID" value="XM_047448887.1"/>
</dbReference>
<dbReference type="RefSeq" id="XP_054203772.1">
    <property type="nucleotide sequence ID" value="XM_054347797.1"/>
</dbReference>
<dbReference type="RefSeq" id="XP_054203773.1">
    <property type="nucleotide sequence ID" value="XM_054347798.1"/>
</dbReference>
<dbReference type="RefSeq" id="XP_054203774.1">
    <property type="nucleotide sequence ID" value="XM_054347799.1"/>
</dbReference>
<dbReference type="PDB" id="3FHR">
    <property type="method" value="X-ray"/>
    <property type="resolution" value="1.90 A"/>
    <property type="chains" value="A=33-349"/>
</dbReference>
<dbReference type="PDB" id="3FXW">
    <property type="method" value="X-ray"/>
    <property type="resolution" value="2.00 A"/>
    <property type="chains" value="A=33-349"/>
</dbReference>
<dbReference type="PDB" id="3R1N">
    <property type="method" value="X-ray"/>
    <property type="resolution" value="2.09 A"/>
    <property type="chains" value="A=33-349"/>
</dbReference>
<dbReference type="PDB" id="3SHE">
    <property type="method" value="X-ray"/>
    <property type="resolution" value="2.25 A"/>
    <property type="chains" value="A=33-349"/>
</dbReference>
<dbReference type="PDB" id="7NRB">
    <property type="method" value="X-ray"/>
    <property type="resolution" value="1.90 A"/>
    <property type="chains" value="A=33-349"/>
</dbReference>
<dbReference type="PDBsum" id="3FHR"/>
<dbReference type="PDBsum" id="3FXW"/>
<dbReference type="PDBsum" id="3R1N"/>
<dbReference type="PDBsum" id="3SHE"/>
<dbReference type="PDBsum" id="7NRB"/>
<dbReference type="SMR" id="Q16644"/>
<dbReference type="BioGRID" id="113617">
    <property type="interactions" value="47"/>
</dbReference>
<dbReference type="CORUM" id="Q16644"/>
<dbReference type="ELM" id="Q16644"/>
<dbReference type="FunCoup" id="Q16644">
    <property type="interactions" value="3726"/>
</dbReference>
<dbReference type="IntAct" id="Q16644">
    <property type="interactions" value="32"/>
</dbReference>
<dbReference type="MINT" id="Q16644"/>
<dbReference type="STRING" id="9606.ENSP00000396467"/>
<dbReference type="BindingDB" id="Q16644"/>
<dbReference type="ChEMBL" id="CHEMBL4670"/>
<dbReference type="DrugBank" id="DB08358">
    <property type="generic name" value="2-(2-QUINOLIN-3-YLPYRIDIN-4-YL)-1,5,6,7-TETRAHYDRO-4H-PYRROLO[3,2-C]PYRIDIN-4-ONE"/>
</dbReference>
<dbReference type="DrugBank" id="DB07728">
    <property type="generic name" value="2-[2-(2-FLUOROPHENYL)PYRIDIN-4-YL]-1,5,6,7-TETRAHYDRO-4H-PYRROLO[3,2-C]PYRIDIN-4-ONE"/>
</dbReference>
<dbReference type="GuidetoPHARMACOLOGY" id="2095"/>
<dbReference type="GlyGen" id="Q16644">
    <property type="glycosylation" value="1 site, 1 O-linked glycan (1 site)"/>
</dbReference>
<dbReference type="iPTMnet" id="Q16644"/>
<dbReference type="PhosphoSitePlus" id="Q16644"/>
<dbReference type="BioMuta" id="MAPKAPK3"/>
<dbReference type="DMDM" id="74762148"/>
<dbReference type="jPOST" id="Q16644"/>
<dbReference type="MassIVE" id="Q16644"/>
<dbReference type="PaxDb" id="9606-ENSP00000396467"/>
<dbReference type="PeptideAtlas" id="Q16644"/>
<dbReference type="ProteomicsDB" id="60998"/>
<dbReference type="Pumba" id="Q16644"/>
<dbReference type="Antibodypedia" id="30996">
    <property type="antibodies" value="344 antibodies from 35 providers"/>
</dbReference>
<dbReference type="DNASU" id="7867"/>
<dbReference type="Ensembl" id="ENST00000357955.6">
    <property type="protein sequence ID" value="ENSP00000350639.2"/>
    <property type="gene ID" value="ENSG00000114738.11"/>
</dbReference>
<dbReference type="Ensembl" id="ENST00000446044.5">
    <property type="protein sequence ID" value="ENSP00000396467.1"/>
    <property type="gene ID" value="ENSG00000114738.11"/>
</dbReference>
<dbReference type="Ensembl" id="ENST00000621469.5">
    <property type="protein sequence ID" value="ENSP00000478922.1"/>
    <property type="gene ID" value="ENSG00000114738.11"/>
</dbReference>
<dbReference type="GeneID" id="7867"/>
<dbReference type="KEGG" id="hsa:7867"/>
<dbReference type="MANE-Select" id="ENST00000621469.5">
    <property type="protein sequence ID" value="ENSP00000478922.1"/>
    <property type="RefSeq nucleotide sequence ID" value="NM_001243925.2"/>
    <property type="RefSeq protein sequence ID" value="NP_001230854.1"/>
</dbReference>
<dbReference type="UCSC" id="uc003day.3">
    <property type="organism name" value="human"/>
</dbReference>
<dbReference type="AGR" id="HGNC:6888"/>
<dbReference type="CTD" id="7867"/>
<dbReference type="DisGeNET" id="7867"/>
<dbReference type="GeneCards" id="MAPKAPK3"/>
<dbReference type="HGNC" id="HGNC:6888">
    <property type="gene designation" value="MAPKAPK3"/>
</dbReference>
<dbReference type="HPA" id="ENSG00000114738">
    <property type="expression patterns" value="Group enriched (bone marrow, heart muscle, skeletal muscle, tongue)"/>
</dbReference>
<dbReference type="MalaCards" id="MAPKAPK3"/>
<dbReference type="MIM" id="602130">
    <property type="type" value="gene"/>
</dbReference>
<dbReference type="MIM" id="617111">
    <property type="type" value="phenotype"/>
</dbReference>
<dbReference type="neXtProt" id="NX_Q16644"/>
<dbReference type="OpenTargets" id="ENSG00000114738"/>
<dbReference type="Orphanet" id="466718">
    <property type="disease" value="Martinique crinkled retinal pigment epitheliopathy"/>
</dbReference>
<dbReference type="PharmGKB" id="PA30632"/>
<dbReference type="VEuPathDB" id="HostDB:ENSG00000114738"/>
<dbReference type="eggNOG" id="KOG0604">
    <property type="taxonomic scope" value="Eukaryota"/>
</dbReference>
<dbReference type="GeneTree" id="ENSGT00940000154089"/>
<dbReference type="InParanoid" id="Q16644"/>
<dbReference type="OMA" id="RTRANMH"/>
<dbReference type="OrthoDB" id="40902at2759"/>
<dbReference type="PAN-GO" id="Q16644">
    <property type="GO annotations" value="11 GO annotations based on evolutionary models"/>
</dbReference>
<dbReference type="PhylomeDB" id="Q16644"/>
<dbReference type="TreeFam" id="TF312891"/>
<dbReference type="PathwayCommons" id="Q16644"/>
<dbReference type="Reactome" id="R-HSA-171007">
    <property type="pathway name" value="p38MAPK events"/>
</dbReference>
<dbReference type="Reactome" id="R-HSA-2559580">
    <property type="pathway name" value="Oxidative Stress Induced Senescence"/>
</dbReference>
<dbReference type="Reactome" id="R-HSA-4420097">
    <property type="pathway name" value="VEGFA-VEGFR2 Pathway"/>
</dbReference>
<dbReference type="Reactome" id="R-HSA-450302">
    <property type="pathway name" value="activated TAK1 mediates p38 MAPK activation"/>
</dbReference>
<dbReference type="SignaLink" id="Q16644"/>
<dbReference type="SIGNOR" id="Q16644"/>
<dbReference type="BioGRID-ORCS" id="7867">
    <property type="hits" value="17 hits in 1190 CRISPR screens"/>
</dbReference>
<dbReference type="ChiTaRS" id="MAPKAPK3">
    <property type="organism name" value="human"/>
</dbReference>
<dbReference type="EvolutionaryTrace" id="Q16644"/>
<dbReference type="GeneWiki" id="MAPKAPK3"/>
<dbReference type="GenomeRNAi" id="7867"/>
<dbReference type="Pharos" id="Q16644">
    <property type="development level" value="Tchem"/>
</dbReference>
<dbReference type="PRO" id="PR:Q16644"/>
<dbReference type="Proteomes" id="UP000005640">
    <property type="component" value="Chromosome 3"/>
</dbReference>
<dbReference type="RNAct" id="Q16644">
    <property type="molecule type" value="protein"/>
</dbReference>
<dbReference type="Bgee" id="ENSG00000114738">
    <property type="expression patterns" value="Expressed in apex of heart and 201 other cell types or tissues"/>
</dbReference>
<dbReference type="ExpressionAtlas" id="Q16644">
    <property type="expression patterns" value="baseline and differential"/>
</dbReference>
<dbReference type="GO" id="GO:0005737">
    <property type="term" value="C:cytoplasm"/>
    <property type="evidence" value="ECO:0000318"/>
    <property type="project" value="GO_Central"/>
</dbReference>
<dbReference type="GO" id="GO:0005829">
    <property type="term" value="C:cytosol"/>
    <property type="evidence" value="ECO:0000304"/>
    <property type="project" value="Reactome"/>
</dbReference>
<dbReference type="GO" id="GO:0005654">
    <property type="term" value="C:nucleoplasm"/>
    <property type="evidence" value="ECO:0000314"/>
    <property type="project" value="HPA"/>
</dbReference>
<dbReference type="GO" id="GO:0005634">
    <property type="term" value="C:nucleus"/>
    <property type="evidence" value="ECO:0000318"/>
    <property type="project" value="GO_Central"/>
</dbReference>
<dbReference type="GO" id="GO:0005524">
    <property type="term" value="F:ATP binding"/>
    <property type="evidence" value="ECO:0007669"/>
    <property type="project" value="UniProtKB-KW"/>
</dbReference>
<dbReference type="GO" id="GO:0009931">
    <property type="term" value="F:calcium-dependent protein serine/threonine kinase activity"/>
    <property type="evidence" value="ECO:0000318"/>
    <property type="project" value="GO_Central"/>
</dbReference>
<dbReference type="GO" id="GO:0004683">
    <property type="term" value="F:calcium/calmodulin-dependent protein kinase activity"/>
    <property type="evidence" value="ECO:0000318"/>
    <property type="project" value="GO_Central"/>
</dbReference>
<dbReference type="GO" id="GO:0005516">
    <property type="term" value="F:calmodulin binding"/>
    <property type="evidence" value="ECO:0000318"/>
    <property type="project" value="GO_Central"/>
</dbReference>
<dbReference type="GO" id="GO:0004708">
    <property type="term" value="F:MAP kinase kinase activity"/>
    <property type="evidence" value="ECO:0000304"/>
    <property type="project" value="ProtInc"/>
</dbReference>
<dbReference type="GO" id="GO:0051019">
    <property type="term" value="F:mitogen-activated protein kinase binding"/>
    <property type="evidence" value="ECO:0000318"/>
    <property type="project" value="GO_Central"/>
</dbReference>
<dbReference type="GO" id="GO:0106310">
    <property type="term" value="F:protein serine kinase activity"/>
    <property type="evidence" value="ECO:0007669"/>
    <property type="project" value="RHEA"/>
</dbReference>
<dbReference type="GO" id="GO:0004674">
    <property type="term" value="F:protein serine/threonine kinase activity"/>
    <property type="evidence" value="ECO:0000314"/>
    <property type="project" value="UniProtKB"/>
</dbReference>
<dbReference type="GO" id="GO:0035556">
    <property type="term" value="P:intracellular signal transduction"/>
    <property type="evidence" value="ECO:0000318"/>
    <property type="project" value="GO_Central"/>
</dbReference>
<dbReference type="GO" id="GO:0044351">
    <property type="term" value="P:macropinocytosis"/>
    <property type="evidence" value="ECO:0000250"/>
    <property type="project" value="UniProtKB"/>
</dbReference>
<dbReference type="GO" id="GO:0000165">
    <property type="term" value="P:MAPK cascade"/>
    <property type="evidence" value="ECO:0000314"/>
    <property type="project" value="BHF-UCL"/>
</dbReference>
<dbReference type="GO" id="GO:0034097">
    <property type="term" value="P:response to cytokine"/>
    <property type="evidence" value="ECO:0000314"/>
    <property type="project" value="UniProtKB"/>
</dbReference>
<dbReference type="GO" id="GO:0032496">
    <property type="term" value="P:response to lipopolysaccharide"/>
    <property type="evidence" value="ECO:0000250"/>
    <property type="project" value="UniProtKB"/>
</dbReference>
<dbReference type="GO" id="GO:0007165">
    <property type="term" value="P:signal transduction"/>
    <property type="evidence" value="ECO:0000304"/>
    <property type="project" value="ProtInc"/>
</dbReference>
<dbReference type="GO" id="GO:0002224">
    <property type="term" value="P:toll-like receptor signaling pathway"/>
    <property type="evidence" value="ECO:0000250"/>
    <property type="project" value="UniProtKB"/>
</dbReference>
<dbReference type="GO" id="GO:0048010">
    <property type="term" value="P:vascular endothelial growth factor receptor signaling pathway"/>
    <property type="evidence" value="ECO:0000304"/>
    <property type="project" value="Reactome"/>
</dbReference>
<dbReference type="CDD" id="cd14172">
    <property type="entry name" value="STKc_MAPKAPK3"/>
    <property type="match status" value="1"/>
</dbReference>
<dbReference type="FunFam" id="1.10.510.10:FF:000094">
    <property type="entry name" value="MAP kinase-activated protein kinase 2"/>
    <property type="match status" value="1"/>
</dbReference>
<dbReference type="FunFam" id="3.30.200.20:FF:000156">
    <property type="entry name" value="MAP kinase-activated protein kinase 3"/>
    <property type="match status" value="1"/>
</dbReference>
<dbReference type="FunFam" id="4.10.1170.10:FF:000001">
    <property type="entry name" value="MAP kinase-activated protein kinase 3"/>
    <property type="match status" value="1"/>
</dbReference>
<dbReference type="Gene3D" id="4.10.1170.10">
    <property type="entry name" value="MAP kinase activated protein kinase 2"/>
    <property type="match status" value="1"/>
</dbReference>
<dbReference type="Gene3D" id="3.30.200.20">
    <property type="entry name" value="Phosphorylase Kinase, domain 1"/>
    <property type="match status" value="1"/>
</dbReference>
<dbReference type="Gene3D" id="1.10.510.10">
    <property type="entry name" value="Transferase(Phosphotransferase) domain 1"/>
    <property type="match status" value="1"/>
</dbReference>
<dbReference type="InterPro" id="IPR011009">
    <property type="entry name" value="Kinase-like_dom_sf"/>
</dbReference>
<dbReference type="InterPro" id="IPR027442">
    <property type="entry name" value="MAPKAPK_C"/>
</dbReference>
<dbReference type="InterPro" id="IPR000719">
    <property type="entry name" value="Prot_kinase_dom"/>
</dbReference>
<dbReference type="InterPro" id="IPR017441">
    <property type="entry name" value="Protein_kinase_ATP_BS"/>
</dbReference>
<dbReference type="InterPro" id="IPR008271">
    <property type="entry name" value="Ser/Thr_kinase_AS"/>
</dbReference>
<dbReference type="PANTHER" id="PTHR24347">
    <property type="entry name" value="SERINE/THREONINE-PROTEIN KINASE"/>
    <property type="match status" value="1"/>
</dbReference>
<dbReference type="Pfam" id="PF00069">
    <property type="entry name" value="Pkinase"/>
    <property type="match status" value="1"/>
</dbReference>
<dbReference type="SMART" id="SM00220">
    <property type="entry name" value="S_TKc"/>
    <property type="match status" value="1"/>
</dbReference>
<dbReference type="SUPFAM" id="SSF56112">
    <property type="entry name" value="Protein kinase-like (PK-like)"/>
    <property type="match status" value="1"/>
</dbReference>
<dbReference type="PROSITE" id="PS00107">
    <property type="entry name" value="PROTEIN_KINASE_ATP"/>
    <property type="match status" value="1"/>
</dbReference>
<dbReference type="PROSITE" id="PS50011">
    <property type="entry name" value="PROTEIN_KINASE_DOM"/>
    <property type="match status" value="1"/>
</dbReference>
<dbReference type="PROSITE" id="PS00108">
    <property type="entry name" value="PROTEIN_KINASE_ST"/>
    <property type="match status" value="1"/>
</dbReference>
<feature type="chain" id="PRO_0000086293" description="MAP kinase-activated protein kinase 3">
    <location>
        <begin position="1"/>
        <end position="382"/>
    </location>
</feature>
<feature type="domain" description="Protein kinase" evidence="3">
    <location>
        <begin position="44"/>
        <end position="304"/>
    </location>
</feature>
<feature type="region of interest" description="Disordered" evidence="5">
    <location>
        <begin position="1"/>
        <end position="34"/>
    </location>
</feature>
<feature type="region of interest" description="Autoinhibitory helix" evidence="1">
    <location>
        <begin position="307"/>
        <end position="343"/>
    </location>
</feature>
<feature type="region of interest" description="p38 MAPK-binding site" evidence="1">
    <location>
        <begin position="345"/>
        <end position="369"/>
    </location>
</feature>
<feature type="region of interest" description="Disordered" evidence="5">
    <location>
        <begin position="357"/>
        <end position="382"/>
    </location>
</feature>
<feature type="short sequence motif" description="Nuclear export signal (NES)" evidence="1">
    <location>
        <begin position="335"/>
        <end position="344"/>
    </location>
</feature>
<feature type="short sequence motif" description="Bipartite nuclear localization signal 1" evidence="1">
    <location>
        <begin position="350"/>
        <end position="353"/>
    </location>
</feature>
<feature type="short sequence motif" description="Bipartite nuclear localization signal 2" evidence="1">
    <location>
        <begin position="364"/>
        <end position="368"/>
    </location>
</feature>
<feature type="compositionally biased region" description="Gly residues" evidence="5">
    <location>
        <begin position="20"/>
        <end position="29"/>
    </location>
</feature>
<feature type="compositionally biased region" description="Polar residues" evidence="5">
    <location>
        <begin position="370"/>
        <end position="382"/>
    </location>
</feature>
<feature type="active site" description="Proton acceptor" evidence="3 4">
    <location>
        <position position="166"/>
    </location>
</feature>
<feature type="binding site" evidence="3">
    <location>
        <begin position="50"/>
        <end position="58"/>
    </location>
    <ligand>
        <name>ATP</name>
        <dbReference type="ChEBI" id="CHEBI:30616"/>
    </ligand>
</feature>
<feature type="binding site" evidence="3">
    <location>
        <position position="73"/>
    </location>
    <ligand>
        <name>ATP</name>
        <dbReference type="ChEBI" id="CHEBI:30616"/>
    </ligand>
</feature>
<feature type="modified residue" description="N-acetylmethionine" evidence="20 21">
    <location>
        <position position="1"/>
    </location>
</feature>
<feature type="modified residue" description="Phosphothreonine; by MAPK14" evidence="2">
    <location>
        <position position="201"/>
    </location>
</feature>
<feature type="modified residue" description="Phosphoserine; by MAPK14" evidence="1">
    <location>
        <position position="251"/>
    </location>
</feature>
<feature type="modified residue" description="Phosphoserine; by autocatalysis" evidence="1">
    <location>
        <position position="307"/>
    </location>
</feature>
<feature type="modified residue" description="Phosphothreonine; by MAPK14" evidence="1">
    <location>
        <position position="313"/>
    </location>
</feature>
<feature type="sequence variant" id="VAR_040755" description="In a glioblastoma multiforme sample; somatic mutation; dbSNP:rs375412266." evidence="10">
    <original>P</original>
    <variation>S</variation>
    <location>
        <position position="28"/>
    </location>
</feature>
<feature type="sequence variant" id="VAR_040756" description="In an ovarian endometrioid sample; somatic mutation." evidence="10">
    <original>E</original>
    <variation>A</variation>
    <location>
        <position position="105"/>
    </location>
</feature>
<feature type="sequence variant" id="VAR_077085" description="In MDPT3; decreased localization to the nucleus; dbSNP:rs886037913." evidence="15">
    <original>L</original>
    <variation>P</variation>
    <location>
        <position position="173"/>
    </location>
</feature>
<feature type="sequence variant" id="VAR_040757" description="In dbSNP:rs56107897." evidence="10">
    <original>D</original>
    <variation>Y</variation>
    <location>
        <position position="276"/>
    </location>
</feature>
<feature type="mutagenesis site" description="Higher affinity toward PCH2." evidence="9">
    <original>K</original>
    <variation>M</variation>
    <location>
        <position position="73"/>
    </location>
</feature>
<feature type="helix" evidence="22">
    <location>
        <begin position="39"/>
        <end position="41"/>
    </location>
</feature>
<feature type="strand" evidence="22">
    <location>
        <begin position="43"/>
        <end position="53"/>
    </location>
</feature>
<feature type="strand" evidence="22">
    <location>
        <begin position="56"/>
        <end position="63"/>
    </location>
</feature>
<feature type="turn" evidence="22">
    <location>
        <begin position="64"/>
        <end position="66"/>
    </location>
</feature>
<feature type="strand" evidence="22">
    <location>
        <begin position="69"/>
        <end position="78"/>
    </location>
</feature>
<feature type="helix" evidence="22">
    <location>
        <begin position="79"/>
        <end position="91"/>
    </location>
</feature>
<feature type="strand" evidence="22">
    <location>
        <begin position="100"/>
        <end position="108"/>
    </location>
</feature>
<feature type="strand" evidence="22">
    <location>
        <begin position="111"/>
        <end position="119"/>
    </location>
</feature>
<feature type="helix" evidence="22">
    <location>
        <begin position="126"/>
        <end position="131"/>
    </location>
</feature>
<feature type="helix" evidence="22">
    <location>
        <begin position="140"/>
        <end position="159"/>
    </location>
</feature>
<feature type="helix" evidence="22">
    <location>
        <begin position="169"/>
        <end position="171"/>
    </location>
</feature>
<feature type="strand" evidence="22">
    <location>
        <begin position="172"/>
        <end position="175"/>
    </location>
</feature>
<feature type="strand" evidence="22">
    <location>
        <begin position="183"/>
        <end position="185"/>
    </location>
</feature>
<feature type="helix" evidence="22">
    <location>
        <begin position="218"/>
        <end position="237"/>
    </location>
</feature>
<feature type="turn" evidence="22">
    <location>
        <begin position="267"/>
        <end position="269"/>
    </location>
</feature>
<feature type="strand" evidence="23">
    <location>
        <begin position="271"/>
        <end position="273"/>
    </location>
</feature>
<feature type="helix" evidence="22">
    <location>
        <begin position="275"/>
        <end position="284"/>
    </location>
</feature>
<feature type="helix" evidence="22">
    <location>
        <begin position="289"/>
        <end position="291"/>
    </location>
</feature>
<feature type="helix" evidence="22">
    <location>
        <begin position="295"/>
        <end position="300"/>
    </location>
</feature>
<feature type="helix" evidence="22">
    <location>
        <begin position="302"/>
        <end position="305"/>
    </location>
</feature>
<feature type="helix" evidence="22">
    <location>
        <begin position="307"/>
        <end position="309"/>
    </location>
</feature>
<feature type="helix" evidence="22">
    <location>
        <begin position="317"/>
        <end position="323"/>
    </location>
</feature>
<feature type="helix" evidence="22">
    <location>
        <begin position="325"/>
        <end position="327"/>
    </location>
</feature>
<feature type="helix" evidence="22">
    <location>
        <begin position="328"/>
        <end position="343"/>
    </location>
</feature>
<feature type="strand" evidence="24">
    <location>
        <begin position="344"/>
        <end position="346"/>
    </location>
</feature>
<gene>
    <name type="primary">MAPKAPK3</name>
</gene>
<keyword id="KW-0002">3D-structure</keyword>
<keyword id="KW-0007">Acetylation</keyword>
<keyword id="KW-0067">ATP-binding</keyword>
<keyword id="KW-0963">Cytoplasm</keyword>
<keyword id="KW-0225">Disease variant</keyword>
<keyword id="KW-0418">Kinase</keyword>
<keyword id="KW-0547">Nucleotide-binding</keyword>
<keyword id="KW-0539">Nucleus</keyword>
<keyword id="KW-0597">Phosphoprotein</keyword>
<keyword id="KW-1267">Proteomics identification</keyword>
<keyword id="KW-1185">Reference proteome</keyword>
<keyword id="KW-0723">Serine/threonine-protein kinase</keyword>
<keyword id="KW-0808">Transferase</keyword>
<accession>Q16644</accession>
<accession>B5BU67</accession>
<protein>
    <recommendedName>
        <fullName>MAP kinase-activated protein kinase 3</fullName>
        <shortName>MAPK-activated protein kinase 3</shortName>
        <shortName>MAPKAP kinase 3</shortName>
        <shortName>MAPKAP-K3</shortName>
        <shortName>MAPKAPK-3</shortName>
        <shortName>MK-3</shortName>
        <ecNumber>2.7.11.1</ecNumber>
    </recommendedName>
    <alternativeName>
        <fullName>Chromosome 3p kinase</fullName>
        <shortName>3pK</shortName>
    </alternativeName>
</protein>
<proteinExistence type="evidence at protein level"/>
<evidence type="ECO:0000250" key="1"/>
<evidence type="ECO:0000250" key="2">
    <source>
        <dbReference type="UniProtKB" id="Q3UMW7"/>
    </source>
</evidence>
<evidence type="ECO:0000255" key="3">
    <source>
        <dbReference type="PROSITE-ProRule" id="PRU00159"/>
    </source>
</evidence>
<evidence type="ECO:0000255" key="4">
    <source>
        <dbReference type="PROSITE-ProRule" id="PRU10027"/>
    </source>
</evidence>
<evidence type="ECO:0000256" key="5">
    <source>
        <dbReference type="SAM" id="MobiDB-lite"/>
    </source>
</evidence>
<evidence type="ECO:0000269" key="6">
    <source>
    </source>
</evidence>
<evidence type="ECO:0000269" key="7">
    <source>
    </source>
</evidence>
<evidence type="ECO:0000269" key="8">
    <source>
    </source>
</evidence>
<evidence type="ECO:0000269" key="9">
    <source>
    </source>
</evidence>
<evidence type="ECO:0000269" key="10">
    <source>
    </source>
</evidence>
<evidence type="ECO:0000269" key="11">
    <source>
    </source>
</evidence>
<evidence type="ECO:0000269" key="12">
    <source>
    </source>
</evidence>
<evidence type="ECO:0000269" key="13">
    <source>
    </source>
</evidence>
<evidence type="ECO:0000269" key="14">
    <source>
    </source>
</evidence>
<evidence type="ECO:0000269" key="15">
    <source>
    </source>
</evidence>
<evidence type="ECO:0000269" key="16">
    <source>
    </source>
</evidence>
<evidence type="ECO:0000269" key="17">
    <source>
    </source>
</evidence>
<evidence type="ECO:0000269" key="18">
    <source>
    </source>
</evidence>
<evidence type="ECO:0000305" key="19"/>
<evidence type="ECO:0007744" key="20">
    <source>
    </source>
</evidence>
<evidence type="ECO:0007744" key="21">
    <source>
    </source>
</evidence>
<evidence type="ECO:0007829" key="22">
    <source>
        <dbReference type="PDB" id="3FHR"/>
    </source>
</evidence>
<evidence type="ECO:0007829" key="23">
    <source>
        <dbReference type="PDB" id="3R1N"/>
    </source>
</evidence>
<evidence type="ECO:0007829" key="24">
    <source>
        <dbReference type="PDB" id="7NRB"/>
    </source>
</evidence>
<reference key="1">
    <citation type="journal article" date="1996" name="J. Biol. Chem.">
        <title>Identification of mitogen-activated protein (MAP) kinase-activated protein kinase-3, a novel substrate of CSBP p38 MAP kinase.</title>
        <authorList>
            <person name="McLaughlin M.M."/>
            <person name="Kumar S."/>
            <person name="McDonnell P.C."/>
            <person name="Van Horn S."/>
            <person name="Lee J.C."/>
            <person name="Livi G.P."/>
            <person name="Young P.R."/>
        </authorList>
    </citation>
    <scope>NUCLEOTIDE SEQUENCE [MRNA]</scope>
    <scope>FUNCTION</scope>
    <scope>TISSUE SPECIFICITY</scope>
    <scope>PHOSPHORYLATION</scope>
</reference>
<reference key="2">
    <citation type="journal article" date="1996" name="Mol. Cell. Biol.">
        <title>3pK, a new mitogen-activated protein kinase-activated protein kinase located in the small cell lung cancer tumor suppressor gene region.</title>
        <authorList>
            <person name="Sithanandam G."/>
            <person name="Latif F."/>
            <person name="Duh F.-M."/>
            <person name="Bernal R."/>
            <person name="Smola U."/>
            <person name="Li H."/>
            <person name="Kuzmin I."/>
            <person name="Wixler V."/>
            <person name="Geil L."/>
            <person name="Shrestha S."/>
            <person name="Lloyd P.A."/>
            <person name="Bader S."/>
            <person name="Sekido Y."/>
            <person name="Tartof K.D."/>
            <person name="Kashuba V.I."/>
            <person name="Zabarovsky E.R."/>
            <person name="Dean M."/>
            <person name="Klein G."/>
            <person name="Lerman M.I."/>
            <person name="Minna J.D."/>
            <person name="Rapp U.R."/>
            <person name="Allikmets R."/>
        </authorList>
    </citation>
    <scope>NUCLEOTIDE SEQUENCE [MRNA]</scope>
    <scope>TISSUE SPECIFICITY</scope>
    <scope>PHOSPHORYLATION BY MAPK1/ERK2 AND MAPK3/ERK1</scope>
    <source>
        <tissue>Heart</tissue>
    </source>
</reference>
<reference key="3">
    <citation type="journal article" date="1996" name="Mol. Cell. Biol.">
        <authorList>
            <person name="Sithanandam G."/>
            <person name="Latif F."/>
            <person name="Duh F.-M."/>
            <person name="Bernal R."/>
            <person name="Smola U."/>
            <person name="Li H."/>
            <person name="Kuzmin I."/>
            <person name="Wixler V."/>
            <person name="Geil L."/>
            <person name="Shrestha S."/>
            <person name="Lloyd P.A."/>
            <person name="Bader S."/>
            <person name="Sekido Y."/>
            <person name="Tartof K.D."/>
            <person name="Kashuba V.I."/>
            <person name="Zabarovsky E.R."/>
            <person name="Dean M."/>
            <person name="Klein G."/>
            <person name="Lerman M.I."/>
            <person name="Minna J.D."/>
            <person name="Rapp U.R."/>
            <person name="Allikmets R."/>
        </authorList>
    </citation>
    <scope>ERRATUM OF PUBMED:8622688</scope>
</reference>
<reference key="4">
    <citation type="journal article" date="2008" name="Nat. Methods">
        <title>Human protein factory for converting the transcriptome into an in vitro-expressed proteome.</title>
        <authorList>
            <person name="Goshima N."/>
            <person name="Kawamura Y."/>
            <person name="Fukumoto A."/>
            <person name="Miura A."/>
            <person name="Honma R."/>
            <person name="Satoh R."/>
            <person name="Wakamatsu A."/>
            <person name="Yamamoto J."/>
            <person name="Kimura K."/>
            <person name="Nishikawa T."/>
            <person name="Andoh T."/>
            <person name="Iida Y."/>
            <person name="Ishikawa K."/>
            <person name="Ito E."/>
            <person name="Kagawa N."/>
            <person name="Kaminaga C."/>
            <person name="Kanehori K."/>
            <person name="Kawakami B."/>
            <person name="Kenmochi K."/>
            <person name="Kimura R."/>
            <person name="Kobayashi M."/>
            <person name="Kuroita T."/>
            <person name="Kuwayama H."/>
            <person name="Maruyama Y."/>
            <person name="Matsuo K."/>
            <person name="Minami K."/>
            <person name="Mitsubori M."/>
            <person name="Mori M."/>
            <person name="Morishita R."/>
            <person name="Murase A."/>
            <person name="Nishikawa A."/>
            <person name="Nishikawa S."/>
            <person name="Okamoto T."/>
            <person name="Sakagami N."/>
            <person name="Sakamoto Y."/>
            <person name="Sasaki Y."/>
            <person name="Seki T."/>
            <person name="Sono S."/>
            <person name="Sugiyama A."/>
            <person name="Sumiya T."/>
            <person name="Takayama T."/>
            <person name="Takayama Y."/>
            <person name="Takeda H."/>
            <person name="Togashi T."/>
            <person name="Yahata K."/>
            <person name="Yamada H."/>
            <person name="Yanagisawa Y."/>
            <person name="Endo Y."/>
            <person name="Imamoto F."/>
            <person name="Kisu Y."/>
            <person name="Tanaka S."/>
            <person name="Isogai T."/>
            <person name="Imai J."/>
            <person name="Watanabe S."/>
            <person name="Nomura N."/>
        </authorList>
    </citation>
    <scope>NUCLEOTIDE SEQUENCE [LARGE SCALE MRNA]</scope>
</reference>
<reference key="5">
    <citation type="submission" date="2005-07" db="EMBL/GenBank/DDBJ databases">
        <authorList>
            <person name="Mural R.J."/>
            <person name="Istrail S."/>
            <person name="Sutton G.G."/>
            <person name="Florea L."/>
            <person name="Halpern A.L."/>
            <person name="Mobarry C.M."/>
            <person name="Lippert R."/>
            <person name="Walenz B."/>
            <person name="Shatkay H."/>
            <person name="Dew I."/>
            <person name="Miller J.R."/>
            <person name="Flanigan M.J."/>
            <person name="Edwards N.J."/>
            <person name="Bolanos R."/>
            <person name="Fasulo D."/>
            <person name="Halldorsson B.V."/>
            <person name="Hannenhalli S."/>
            <person name="Turner R."/>
            <person name="Yooseph S."/>
            <person name="Lu F."/>
            <person name="Nusskern D.R."/>
            <person name="Shue B.C."/>
            <person name="Zheng X.H."/>
            <person name="Zhong F."/>
            <person name="Delcher A.L."/>
            <person name="Huson D.H."/>
            <person name="Kravitz S.A."/>
            <person name="Mouchard L."/>
            <person name="Reinert K."/>
            <person name="Remington K.A."/>
            <person name="Clark A.G."/>
            <person name="Waterman M.S."/>
            <person name="Eichler E.E."/>
            <person name="Adams M.D."/>
            <person name="Hunkapiller M.W."/>
            <person name="Myers E.W."/>
            <person name="Venter J.C."/>
        </authorList>
    </citation>
    <scope>NUCLEOTIDE SEQUENCE [LARGE SCALE GENOMIC DNA]</scope>
</reference>
<reference key="6">
    <citation type="journal article" date="2004" name="Genome Res.">
        <title>The status, quality, and expansion of the NIH full-length cDNA project: the Mammalian Gene Collection (MGC).</title>
        <authorList>
            <consortium name="The MGC Project Team"/>
        </authorList>
    </citation>
    <scope>NUCLEOTIDE SEQUENCE [LARGE SCALE MRNA]</scope>
    <source>
        <tissue>Colon</tissue>
        <tissue>Skin</tissue>
    </source>
</reference>
<reference key="7">
    <citation type="journal article" date="1996" name="FEBS Lett.">
        <title>A comparison of the substrate specificity of MAPKAP kinase-2 and MAPKAP kinase-3 and their activation by cytokines and cellular stress.</title>
        <authorList>
            <person name="Clifton A.D."/>
            <person name="Young P.R."/>
            <person name="Cohen P."/>
        </authorList>
    </citation>
    <scope>CATALYTIC ACTIVITY</scope>
    <scope>FUNCTION IN PHOSPHORYLATION OF HSPB1</scope>
</reference>
<reference key="8">
    <citation type="journal article" date="1999" name="J. Biol. Chem.">
        <title>Regulation of Hsp27 oligomerization, chaperone function, and protective activity against oxidative stress/tumor necrosis factor alpha by phosphorylation.</title>
        <authorList>
            <person name="Rogalla T."/>
            <person name="Ehrnsperger M."/>
            <person name="Preville X."/>
            <person name="Kotlyarov A."/>
            <person name="Lutsch G."/>
            <person name="Ducasse C."/>
            <person name="Paul C."/>
            <person name="Wieske M."/>
            <person name="Arrigo A.P."/>
            <person name="Buchner J."/>
            <person name="Gaestel M."/>
        </authorList>
    </citation>
    <scope>FUNCTION IN PHOSPHORYLATION OF HSPB1</scope>
</reference>
<reference key="9">
    <citation type="journal article" date="2000" name="J. Biol. Chem.">
        <title>Serine/Threonine kinases 3pK and MAPK-activated protein kinase 2 interact with the basic helix-loop-helix transcription factor E47 and repress its transcriptional activity.</title>
        <authorList>
            <person name="Neufeld B."/>
            <person name="Grosse-Wilde A."/>
            <person name="Hoffmeyer A."/>
            <person name="Jordan B.W."/>
            <person name="Chen P."/>
            <person name="Dinev D."/>
            <person name="Ludwig S."/>
            <person name="Rapp U.R."/>
        </authorList>
    </citation>
    <scope>INTERACTION WITH TCF3</scope>
</reference>
<reference key="10">
    <citation type="journal article" date="2004" name="Exp. Cell Res.">
        <title>Mitogen-activated 3p kinase is active in the nucleus.</title>
        <authorList>
            <person name="Zakowski V."/>
            <person name="Keramas G."/>
            <person name="Kilian K."/>
            <person name="Rapp U.R."/>
            <person name="Ludwig S."/>
        </authorList>
    </citation>
    <scope>SUBCELLULAR LOCATION</scope>
</reference>
<reference key="11">
    <citation type="journal article" date="2005" name="J. Biol. Chem.">
        <title>MAPKAP kinase 3pK phosphorylates and regulates chromatin association of the polycomb group protein Bmi1.</title>
        <authorList>
            <person name="Voncken J.W."/>
            <person name="Niessen H."/>
            <person name="Neufeld B."/>
            <person name="Rennefahrt U."/>
            <person name="Dahlmans V."/>
            <person name="Kubben N."/>
            <person name="Holzer B."/>
            <person name="Ludwig S."/>
            <person name="Rapp U.R."/>
        </authorList>
    </citation>
    <scope>FUNCTION</scope>
    <scope>MUTAGENESIS OF LYS-73</scope>
    <scope>INTERACTION WITH PHC2 AND BMI1</scope>
</reference>
<reference key="12">
    <citation type="journal article" date="2008" name="Biochem. J.">
        <title>Roles for TAB1 in regulating the IL-1-dependent phosphorylation of the TAB3 regulatory subunit and activity of the TAK1 complex.</title>
        <authorList>
            <person name="Mendoza H."/>
            <person name="Campbell D.G."/>
            <person name="Burness K."/>
            <person name="Hastie J."/>
            <person name="Ronkina N."/>
            <person name="Shim J.H."/>
            <person name="Arthur J.S."/>
            <person name="Davis R.J."/>
            <person name="Gaestel M."/>
            <person name="Johnson G.L."/>
            <person name="Ghosh S."/>
            <person name="Cohen P."/>
        </authorList>
    </citation>
    <scope>FUNCTION IN PHOSPHORYLATION OF TAB3</scope>
</reference>
<reference key="13">
    <citation type="journal article" date="2009" name="Anal. Chem.">
        <title>Lys-N and trypsin cover complementary parts of the phosphoproteome in a refined SCX-based approach.</title>
        <authorList>
            <person name="Gauci S."/>
            <person name="Helbig A.O."/>
            <person name="Slijper M."/>
            <person name="Krijgsveld J."/>
            <person name="Heck A.J."/>
            <person name="Mohammed S."/>
        </authorList>
    </citation>
    <scope>ACETYLATION [LARGE SCALE ANALYSIS] AT MET-1</scope>
    <scope>IDENTIFICATION BY MASS SPECTROMETRY [LARGE SCALE ANALYSIS]</scope>
</reference>
<reference key="14">
    <citation type="journal article" date="2010" name="Biochem. Pharmacol.">
        <title>MAPKAP kinases MK2 and MK3 in inflammation: complex regulation of TNF biosynthesis via expression and phosphorylation of tristetraprolin.</title>
        <authorList>
            <person name="Ronkina N."/>
            <person name="Menon M.B."/>
            <person name="Schwermann J."/>
            <person name="Tiedje C."/>
            <person name="Hitti E."/>
            <person name="Kotlyarov A."/>
            <person name="Gaestel M."/>
        </authorList>
    </citation>
    <scope>FUNCTION</scope>
</reference>
<reference key="15">
    <citation type="journal article" date="2008" name="Front. Biosci.">
        <title>MK2 and MK3--a pair of isoenzymes?</title>
        <authorList>
            <person name="Ronkina N."/>
            <person name="Kotlyarov A."/>
            <person name="Gaestel M."/>
        </authorList>
    </citation>
    <scope>REVIEW</scope>
</reference>
<reference key="16">
    <citation type="journal article" date="2011" name="BMC Syst. Biol.">
        <title>Initial characterization of the human central proteome.</title>
        <authorList>
            <person name="Burkard T.R."/>
            <person name="Planyavsky M."/>
            <person name="Kaupe I."/>
            <person name="Breitwieser F.P."/>
            <person name="Buerckstuemmer T."/>
            <person name="Bennett K.L."/>
            <person name="Superti-Furga G."/>
            <person name="Colinge J."/>
        </authorList>
    </citation>
    <scope>IDENTIFICATION BY MASS SPECTROMETRY [LARGE SCALE ANALYSIS]</scope>
</reference>
<reference key="17">
    <citation type="journal article" date="2012" name="Proc. Natl. Acad. Sci. U.S.A.">
        <title>N-terminal acetylome analyses and functional insights of the N-terminal acetyltransferase NatB.</title>
        <authorList>
            <person name="Van Damme P."/>
            <person name="Lasa M."/>
            <person name="Polevoda B."/>
            <person name="Gazquez C."/>
            <person name="Elosegui-Artola A."/>
            <person name="Kim D.S."/>
            <person name="De Juan-Pardo E."/>
            <person name="Demeyer K."/>
            <person name="Hole K."/>
            <person name="Larrea E."/>
            <person name="Timmerman E."/>
            <person name="Prieto J."/>
            <person name="Arnesen T."/>
            <person name="Sherman F."/>
            <person name="Gevaert K."/>
            <person name="Aldabe R."/>
        </authorList>
    </citation>
    <scope>ACETYLATION [LARGE SCALE ANALYSIS] AT MET-1</scope>
    <scope>IDENTIFICATION BY MASS SPECTROMETRY [LARGE SCALE ANALYSIS]</scope>
</reference>
<reference key="18">
    <citation type="journal article" date="2016" name="Hum. Mol. Genet.">
        <title>A dominant mutation in MAPKAPK3, an actor of p38 signaling pathway, causes a new retinal dystrophy involving Bruch's membrane and retinal pigment epithelium.</title>
        <authorList>
            <person name="Meunier I."/>
            <person name="Lenaers G."/>
            <person name="Bocquet B."/>
            <person name="Baudoin C."/>
            <person name="Piro-Megy C."/>
            <person name="Cubizolle A."/>
            <person name="Quiles M."/>
            <person name="Jean-Charles A."/>
            <person name="Cohen S.Y."/>
            <person name="Merle H."/>
            <person name="Gaudric A."/>
            <person name="Labesse G."/>
            <person name="Manes G."/>
            <person name="Pequignot M."/>
            <person name="Cazevieille C."/>
            <person name="Dhaenens C.M."/>
            <person name="Fichard A."/>
            <person name="Ronkina N."/>
            <person name="Arthur S.J."/>
            <person name="Gaestel M."/>
            <person name="Hamel C.P."/>
        </authorList>
    </citation>
    <scope>TISSUE SPECIFICITY</scope>
    <scope>SUBCELLULAR LOCATION</scope>
    <scope>INVOLVEMENT IN MDPT3</scope>
    <scope>VARIANT MDPT3 PRO-173</scope>
    <scope>CHARACTERIZATION OF VARIANT MDPT3 PRO-173</scope>
</reference>
<reference key="19">
    <citation type="journal article" date="2010" name="Protein Sci.">
        <title>High-resolution crystal structure of human Mapkap kinase 3 in complex with a high affinity ligand.</title>
        <authorList>
            <person name="Cheng R."/>
            <person name="Felicetti B."/>
            <person name="Palan S."/>
            <person name="Toogood-Johnson I."/>
            <person name="Scheich C."/>
            <person name="Barker J."/>
            <person name="Whittaker M."/>
            <person name="Hesterkamp T."/>
        </authorList>
    </citation>
    <scope>X-RAY CRYSTALLOGRAPHY (1.9 ANGSTROMS) OF 33-349 IN COMPLEX WITH INHIBITOR P4O</scope>
</reference>
<reference key="20">
    <citation type="journal article" date="2011" name="Bioorg. Med. Chem. Lett.">
        <title>Structure-based lead identification of ATP-competitive MK2 inhibitors.</title>
        <authorList>
            <person name="Barf T."/>
            <person name="Kaptein A."/>
            <person name="de Wilde S."/>
            <person name="van der Heijden R."/>
            <person name="van Someren R."/>
            <person name="Demont D."/>
            <person name="Schultz-Fademrecht C."/>
            <person name="Versteegh J."/>
            <person name="van Zeeland M."/>
            <person name="Seegers N."/>
            <person name="Kazemier B."/>
            <person name="van de Kar B."/>
            <person name="van Hoek M."/>
            <person name="de Roos J."/>
            <person name="Klop H."/>
            <person name="Smeets R."/>
            <person name="Hofstra C."/>
            <person name="Hornberg J."/>
            <person name="Oubrie A."/>
        </authorList>
    </citation>
    <scope>X-RAY CRYSTALLOGRAPHY (2.09 ANGSTROMS) OF 33-349 IN COMPLEX WITH INHIBITOR 5B</scope>
</reference>
<reference key="21">
    <citation type="journal article" date="2007" name="Nature">
        <title>Patterns of somatic mutation in human cancer genomes.</title>
        <authorList>
            <person name="Greenman C."/>
            <person name="Stephens P."/>
            <person name="Smith R."/>
            <person name="Dalgliesh G.L."/>
            <person name="Hunter C."/>
            <person name="Bignell G."/>
            <person name="Davies H."/>
            <person name="Teague J."/>
            <person name="Butler A."/>
            <person name="Stevens C."/>
            <person name="Edkins S."/>
            <person name="O'Meara S."/>
            <person name="Vastrik I."/>
            <person name="Schmidt E.E."/>
            <person name="Avis T."/>
            <person name="Barthorpe S."/>
            <person name="Bhamra G."/>
            <person name="Buck G."/>
            <person name="Choudhury B."/>
            <person name="Clements J."/>
            <person name="Cole J."/>
            <person name="Dicks E."/>
            <person name="Forbes S."/>
            <person name="Gray K."/>
            <person name="Halliday K."/>
            <person name="Harrison R."/>
            <person name="Hills K."/>
            <person name="Hinton J."/>
            <person name="Jenkinson A."/>
            <person name="Jones D."/>
            <person name="Menzies A."/>
            <person name="Mironenko T."/>
            <person name="Perry J."/>
            <person name="Raine K."/>
            <person name="Richardson D."/>
            <person name="Shepherd R."/>
            <person name="Small A."/>
            <person name="Tofts C."/>
            <person name="Varian J."/>
            <person name="Webb T."/>
            <person name="West S."/>
            <person name="Widaa S."/>
            <person name="Yates A."/>
            <person name="Cahill D.P."/>
            <person name="Louis D.N."/>
            <person name="Goldstraw P."/>
            <person name="Nicholson A.G."/>
            <person name="Brasseur F."/>
            <person name="Looijenga L."/>
            <person name="Weber B.L."/>
            <person name="Chiew Y.-E."/>
            <person name="DeFazio A."/>
            <person name="Greaves M.F."/>
            <person name="Green A.R."/>
            <person name="Campbell P."/>
            <person name="Birney E."/>
            <person name="Easton D.F."/>
            <person name="Chenevix-Trench G."/>
            <person name="Tan M.-H."/>
            <person name="Khoo S.K."/>
            <person name="Teh B.T."/>
            <person name="Yuen S.T."/>
            <person name="Leung S.Y."/>
            <person name="Wooster R."/>
            <person name="Futreal P.A."/>
            <person name="Stratton M.R."/>
        </authorList>
    </citation>
    <scope>VARIANTS [LARGE SCALE ANALYSIS] SER-28; ALA-105 AND TYR-276</scope>
</reference>
<sequence length="382" mass="42987">MDGETAEEQGGPVPPPVAPGGPGLGGAPGGRREPKKYAVTDDYQLSKQVLGLGVNGKVLECFHRRTGQKCALKLLYDSPKARQEVDHHWQASGGPHIVCILDVYENMHHGKRCLLIIMECMEGGELFSRIQERGDQAFTEREAAEIMRDIGTAIQFLHSHNIAHRDVKPENLLYTSKEKDAVLKLTDFGFAKETTQNALQTPCYTPYYVAPEVLGPEKYDKSCDMWSLGVIMYILLCGFPPFYSNTGQAISPGMKRRIRLGQYGFPNPEWSEVSEDAKQLIRLLLKTDPTERLTITQFMNHPWINQSMVVPQTPLHTARVLQEDKDHWDEVKEEMTSALATMRVDYDQVKIKDLKTSNNRLLNKRRKKQAGSSSASQGCNNQ</sequence>
<comment type="function">
    <text evidence="6 9 11 13 17 18">Stress-activated serine/threonine-protein kinase involved in cytokines production, endocytosis, cell migration, chromatin remodeling and transcriptional regulation. Following stress, it is phosphorylated and activated by MAP kinase p38-alpha/MAPK14, leading to phosphorylation of substrates. Phosphorylates serine in the peptide sequence, Hyd-X-R-X(2)-S, where Hyd is a large hydrophobic residue. MAPKAPK2 and MAPKAPK3, share the same function and substrate specificity, but MAPKAPK3 kinase activity and level in protein expression are lower compared to MAPKAPK2. Phosphorylates HSP27/HSPB1, KRT18, KRT20, RCSD1, RPS6KA3, TAB3 and TTP/ZFP36. Mediates phosphorylation of HSP27/HSPB1 in response to stress, leading to dissociate HSP27/HSPB1 from large small heat-shock protein (sHsps) oligomers and impair their chaperone activities and ability to protect against oxidative stress effectively. Involved in inflammatory response by regulating tumor necrosis factor (TNF) and IL6 production post-transcriptionally: acts by phosphorylating AU-rich elements (AREs)-binding proteins, such as TTP/ZFP36, leading to regulate the stability and translation of TNF and IL6 mRNAs. Phosphorylation of TTP/ZFP36, a major post-transcriptional regulator of TNF, promotes its binding to 14-3-3 proteins and reduces its ARE mRNA affinity leading to inhibition of dependent degradation of ARE-containing transcript. Involved in toll-like receptor signaling pathway (TLR) in dendritic cells: required for acute TLR-induced macropinocytosis by phosphorylating and activating RPS6KA3. Also acts as a modulator of Polycomb-mediated repression.</text>
</comment>
<comment type="catalytic activity">
    <reaction evidence="18">
        <text>L-seryl-[protein] + ATP = O-phospho-L-seryl-[protein] + ADP + H(+)</text>
        <dbReference type="Rhea" id="RHEA:17989"/>
        <dbReference type="Rhea" id="RHEA-COMP:9863"/>
        <dbReference type="Rhea" id="RHEA-COMP:11604"/>
        <dbReference type="ChEBI" id="CHEBI:15378"/>
        <dbReference type="ChEBI" id="CHEBI:29999"/>
        <dbReference type="ChEBI" id="CHEBI:30616"/>
        <dbReference type="ChEBI" id="CHEBI:83421"/>
        <dbReference type="ChEBI" id="CHEBI:456216"/>
        <dbReference type="EC" id="2.7.11.1"/>
    </reaction>
</comment>
<comment type="catalytic activity">
    <reaction evidence="18">
        <text>L-threonyl-[protein] + ATP = O-phospho-L-threonyl-[protein] + ADP + H(+)</text>
        <dbReference type="Rhea" id="RHEA:46608"/>
        <dbReference type="Rhea" id="RHEA-COMP:11060"/>
        <dbReference type="Rhea" id="RHEA-COMP:11605"/>
        <dbReference type="ChEBI" id="CHEBI:15378"/>
        <dbReference type="ChEBI" id="CHEBI:30013"/>
        <dbReference type="ChEBI" id="CHEBI:30616"/>
        <dbReference type="ChEBI" id="CHEBI:61977"/>
        <dbReference type="ChEBI" id="CHEBI:456216"/>
        <dbReference type="EC" id="2.7.11.1"/>
    </reaction>
</comment>
<comment type="activity regulation">
    <text>Activated following phosphorylation by p38-alpha/MAPK14 following various stresses. Inhibited by ligand 5B (2'-[2-(1,3-benzodioxol-5-yl)pyrimidin-4-yl]-5',6'-dihydrospiro[piperidine-4,7'-pyrrolo[3,2-c]pyridin]- 4'(1'h)-one) and ligand P4O (2-[2-(2-fluorophenyl)pyridin-4-yl]-1,5,6,7-tetrahydro- 4h-pyrrolo[3,2-c]pyridin-4-one), 2 ATP-competitive inhibitors.</text>
</comment>
<comment type="subunit">
    <text evidence="1 7 9 12 14">Heterodimer with p38-alpha/MAPK14. The heterodimer with p38-alpha/MAPK14 forms a stable complex: molecules are positioned 'face to face' so that the ATP-binding sites of both kinases are at the heterodimer interface (By similarity). Interacts with TCF3 and with polycomb proteins, such as PCH2 and BMI1/PCGF4.</text>
</comment>
<comment type="interaction">
    <interactant intactId="EBI-1384657">
        <id>Q16644</id>
    </interactant>
    <interactant intactId="EBI-352682">
        <id>P04792</id>
        <label>HSPB1</label>
    </interactant>
    <organismsDiffer>false</organismsDiffer>
    <experiments>3</experiments>
</comment>
<comment type="interaction">
    <interactant intactId="EBI-1384657">
        <id>Q16644</id>
    </interactant>
    <interactant intactId="EBI-298304">
        <id>Q15759</id>
        <label>MAPK11</label>
    </interactant>
    <organismsDiffer>false</organismsDiffer>
    <experiments>7</experiments>
</comment>
<comment type="interaction">
    <interactant intactId="EBI-1384657">
        <id>Q16644</id>
    </interactant>
    <interactant intactId="EBI-73946">
        <id>Q16539</id>
        <label>MAPK14</label>
    </interactant>
    <organismsDiffer>false</organismsDiffer>
    <experiments>15</experiments>
</comment>
<comment type="interaction">
    <interactant intactId="EBI-1384657">
        <id>Q16644</id>
    </interactant>
    <interactant intactId="EBI-6377335">
        <id>PRO_0000037566</id>
        <dbReference type="UniProtKB" id="P27958"/>
    </interactant>
    <organismsDiffer>true</organismsDiffer>
    <experiments>5</experiments>
</comment>
<comment type="subcellular location">
    <subcellularLocation>
        <location evidence="8 15">Nucleus</location>
    </subcellularLocation>
    <subcellularLocation>
        <location evidence="8 15">Cytoplasm</location>
    </subcellularLocation>
    <text>Predominantly located in the nucleus, when activated it translocates to the cytoplasm.</text>
</comment>
<comment type="tissue specificity">
    <text evidence="15 16 17">Widely expressed, with a higher expression level observed in heart and skeletal muscle. No expression in brain. Expressed in the retinal pigment epithelium (PubMed:26744326).</text>
</comment>
<comment type="PTM">
    <text evidence="1">Phosphorylated and activated by MAPK1/ERK2 and MAPK3/ERK1. Phosphorylated and activated by MAP kinase p38-alpha/MAPK14 at Thr-201, Ser-251 and Thr-313 (By similarity).</text>
</comment>
<comment type="disease" evidence="15">
    <disease id="DI-04818">
        <name>Macular dystrophy, patterned, 3</name>
        <acronym>MDPT3</acronym>
        <description>A form of retinal patterned dystrophy, characterized by retinal pigment epithelium and Bruch's membrane changes resembling a 'dry desert land'. It begins around the age of 30 and progresses to retinitis pigmentosa. MDPT3 inheritance is autosomal dominant.</description>
        <dbReference type="MIM" id="617111"/>
    </disease>
    <text>The disease is caused by variants affecting the gene represented in this entry.</text>
</comment>
<comment type="similarity">
    <text evidence="19">Belongs to the protein kinase superfamily. CAMK Ser/Thr protein kinase family.</text>
</comment>